<name>PILR_LINUS</name>
<evidence type="ECO:0000250" key="1"/>
<evidence type="ECO:0000250" key="2">
    <source>
        <dbReference type="UniProtKB" id="Q9LD14"/>
    </source>
</evidence>
<evidence type="ECO:0000269" key="3">
    <source>
    </source>
</evidence>
<evidence type="ECO:0000269" key="4">
    <source>
    </source>
</evidence>
<evidence type="ECO:0000269" key="5">
    <source>
    </source>
</evidence>
<evidence type="ECO:0000305" key="6"/>
<feature type="initiator methionine" description="Removed" evidence="1">
    <location>
        <position position="1"/>
    </location>
</feature>
<feature type="chain" id="PRO_0000422937" description="Bifunctional pinoresinol-lariciresinol reductase">
    <location>
        <begin position="2"/>
        <end position="312"/>
    </location>
</feature>
<feature type="active site" description="Proton acceptor" evidence="2">
    <location>
        <position position="136"/>
    </location>
</feature>
<feature type="binding site" evidence="2">
    <location>
        <begin position="10"/>
        <end position="16"/>
    </location>
    <ligand>
        <name>NADP(+)</name>
        <dbReference type="ChEBI" id="CHEBI:58349"/>
    </ligand>
</feature>
<feature type="binding site" evidence="2">
    <location>
        <position position="35"/>
    </location>
    <ligand>
        <name>NADP(+)</name>
        <dbReference type="ChEBI" id="CHEBI:58349"/>
    </ligand>
</feature>
<feature type="binding site" evidence="2">
    <location>
        <position position="44"/>
    </location>
    <ligand>
        <name>NADP(+)</name>
        <dbReference type="ChEBI" id="CHEBI:58349"/>
    </ligand>
</feature>
<feature type="binding site" evidence="2">
    <location>
        <position position="140"/>
    </location>
    <ligand>
        <name>NADP(+)</name>
        <dbReference type="ChEBI" id="CHEBI:58349"/>
    </ligand>
</feature>
<feature type="binding site" evidence="2">
    <location>
        <position position="268"/>
    </location>
    <ligand>
        <name>substrate</name>
    </ligand>
</feature>
<sequence length="312" mass="35112">MGRCRVLVVGGTGYIGKRIVKASIEHGHDTYVLKRPETGLDIEKFQLLLSFKKQGAHLVEASFSDHESLVRAVKLVDVVICTVSGAHSRSLLLQLKLVEAIKEAGNVKRFIPSEFGMDPARMGDALEPGRETFDLKMVVRKAIEDANIPHTYISANCFGGYFVGNLSQLGPLTPPSDKVTIYGDGNVKVVYMDEDDVATYTIMTIEDDRTLNKTMYFRPPENVITHRQLVETWEKLSGNQLQKTELSSQDFLALMEGKDVAEQIVIGHLYHIYYEGCLTNFDIDADQDQVEASSLYPEVEYTRMKDYLMIYL</sequence>
<dbReference type="EMBL" id="AX191955">
    <property type="protein sequence ID" value="CAC51250.1"/>
    <property type="molecule type" value="Unassigned_DNA"/>
</dbReference>
<dbReference type="SMR" id="P0DKC8"/>
<dbReference type="GO" id="GO:0010284">
    <property type="term" value="F:lariciresinol reductase activity"/>
    <property type="evidence" value="ECO:0007669"/>
    <property type="project" value="UniProtKB-ARBA"/>
</dbReference>
<dbReference type="GO" id="GO:0010283">
    <property type="term" value="F:pinoresinol reductase activity"/>
    <property type="evidence" value="ECO:0007669"/>
    <property type="project" value="UniProtKB-ARBA"/>
</dbReference>
<dbReference type="GO" id="GO:0042537">
    <property type="term" value="P:benzene-containing compound metabolic process"/>
    <property type="evidence" value="ECO:0007669"/>
    <property type="project" value="UniProtKB-ARBA"/>
</dbReference>
<dbReference type="GO" id="GO:0034312">
    <property type="term" value="P:diol biosynthetic process"/>
    <property type="evidence" value="ECO:0007669"/>
    <property type="project" value="UniProtKB-ARBA"/>
</dbReference>
<dbReference type="GO" id="GO:1901502">
    <property type="term" value="P:ether catabolic process"/>
    <property type="evidence" value="ECO:0007669"/>
    <property type="project" value="UniProtKB-ARBA"/>
</dbReference>
<dbReference type="GO" id="GO:0009807">
    <property type="term" value="P:lignan biosynthetic process"/>
    <property type="evidence" value="ECO:0007669"/>
    <property type="project" value="UniProtKB-ARBA"/>
</dbReference>
<dbReference type="GO" id="GO:0046273">
    <property type="term" value="P:lignan catabolic process"/>
    <property type="evidence" value="ECO:0007669"/>
    <property type="project" value="UniProtKB-ARBA"/>
</dbReference>
<dbReference type="GO" id="GO:0046189">
    <property type="term" value="P:phenol-containing compound biosynthetic process"/>
    <property type="evidence" value="ECO:0007669"/>
    <property type="project" value="UniProtKB-ARBA"/>
</dbReference>
<dbReference type="GO" id="GO:0019336">
    <property type="term" value="P:phenol-containing compound catabolic process"/>
    <property type="evidence" value="ECO:0007669"/>
    <property type="project" value="UniProtKB-ARBA"/>
</dbReference>
<dbReference type="CDD" id="cd05259">
    <property type="entry name" value="PCBER_SDR_a"/>
    <property type="match status" value="1"/>
</dbReference>
<dbReference type="Gene3D" id="3.40.50.720">
    <property type="entry name" value="NAD(P)-binding Rossmann-like Domain"/>
    <property type="match status" value="1"/>
</dbReference>
<dbReference type="Gene3D" id="3.90.25.10">
    <property type="entry name" value="UDP-galactose 4-epimerase, domain 1"/>
    <property type="match status" value="1"/>
</dbReference>
<dbReference type="InterPro" id="IPR036291">
    <property type="entry name" value="NAD(P)-bd_dom_sf"/>
</dbReference>
<dbReference type="InterPro" id="IPR008030">
    <property type="entry name" value="NmrA-like"/>
</dbReference>
<dbReference type="InterPro" id="IPR050608">
    <property type="entry name" value="NmrA-type/Isoflavone_red_sf"/>
</dbReference>
<dbReference type="InterPro" id="IPR045312">
    <property type="entry name" value="PCBER-like"/>
</dbReference>
<dbReference type="PANTHER" id="PTHR43349:SF4">
    <property type="entry name" value="PINORESINOL REDUCTASE 1-RELATED"/>
    <property type="match status" value="1"/>
</dbReference>
<dbReference type="PANTHER" id="PTHR43349">
    <property type="entry name" value="PINORESINOL REDUCTASE-RELATED"/>
    <property type="match status" value="1"/>
</dbReference>
<dbReference type="Pfam" id="PF05368">
    <property type="entry name" value="NmrA"/>
    <property type="match status" value="1"/>
</dbReference>
<dbReference type="SUPFAM" id="SSF51735">
    <property type="entry name" value="NAD(P)-binding Rossmann-fold domains"/>
    <property type="match status" value="1"/>
</dbReference>
<proteinExistence type="evidence at transcript level"/>
<organism>
    <name type="scientific">Linum usitatissimum</name>
    <name type="common">Flax</name>
    <name type="synonym">Linum humile</name>
    <dbReference type="NCBI Taxonomy" id="4006"/>
    <lineage>
        <taxon>Eukaryota</taxon>
        <taxon>Viridiplantae</taxon>
        <taxon>Streptophyta</taxon>
        <taxon>Embryophyta</taxon>
        <taxon>Tracheophyta</taxon>
        <taxon>Spermatophyta</taxon>
        <taxon>Magnoliopsida</taxon>
        <taxon>eudicotyledons</taxon>
        <taxon>Gunneridae</taxon>
        <taxon>Pentapetalae</taxon>
        <taxon>rosids</taxon>
        <taxon>fabids</taxon>
        <taxon>Malpighiales</taxon>
        <taxon>Linaceae</taxon>
        <taxon>Linum</taxon>
    </lineage>
</organism>
<comment type="function">
    <text evidence="1">Reductase involved in lignan biosynthesis. Catalyzes the sequential conversion of pinoresinol into lariciresinol and of lariciresinol into secoisolariciresinol. Abstracts the 4R-hydride from the NADPH cofactor during catalysis (By similarity).</text>
</comment>
<comment type="subunit">
    <text evidence="1">Dimer.</text>
</comment>
<comment type="tissue specificity">
    <text evidence="3">Expressed in seed coats, but not in embryos, leaves, stems and roots.</text>
</comment>
<comment type="developmental stage">
    <text evidence="4">Expressed during seed development, with a pic at mid-maturation.</text>
</comment>
<comment type="induction">
    <text evidence="4 5">Up-regulated by abscisic acid and down-regulated by gibberellins.</text>
</comment>
<comment type="similarity">
    <text evidence="6">Belongs to the NmrA-type oxidoreductase family. Isoflavone reductase subfamily.</text>
</comment>
<reference key="1">
    <citation type="patent" date="2001-07-12" number="WO0149833">
        <title>Recombinant pinoresinol/lariciresinol reductase, recombinant dirigent protein, and methods of use.</title>
        <authorList>
            <person name="Lewis N.G."/>
            <person name="Davin L.B."/>
            <person name="Dinkova-Kostova A.T."/>
            <person name="Fujita M."/>
            <person name="Gang D.R."/>
            <person name="Ford J.D."/>
            <person name="Sarkanen S."/>
        </authorList>
    </citation>
    <scope>NUCLEOTIDE SEQUENCE [MRNA]</scope>
</reference>
<reference key="2">
    <citation type="journal article" date="2006" name="Planta">
        <title>Pinoresinol-lariciresinol reductase gene expression and secoisolariciresinol diglucoside accumulation in developing flax (Linum usitatissimum) seeds.</title>
        <authorList>
            <person name="Hano C."/>
            <person name="Martin I."/>
            <person name="Fliniaux O."/>
            <person name="Legrand B."/>
            <person name="Gutierrez L."/>
            <person name="Arroo R.R."/>
            <person name="Mesnard F."/>
            <person name="Lamblin F."/>
            <person name="Laine E."/>
        </authorList>
    </citation>
    <scope>TISSUE SPECIFICITY</scope>
</reference>
<reference key="3">
    <citation type="journal article" date="2012" name="Planta">
        <title>Abscisic acid regulates pinoresinol-lariciresinol reductase gene expression and secoisolariciresinol accumulation in developing flax (Linum usitatissimum L.) seeds.</title>
        <authorList>
            <person name="Renouard S."/>
            <person name="Corbin C."/>
            <person name="Lopez T."/>
            <person name="Montguillon J."/>
            <person name="Gutierrez L."/>
            <person name="Lamblin F."/>
            <person name="Laine E."/>
            <person name="Hano C."/>
        </authorList>
    </citation>
    <scope>DEVELOPMENTAL STAGE</scope>
    <scope>INDUCTION BY ABSCISIC ACID</scope>
</reference>
<reference key="4">
    <citation type="journal article" date="2013" name="J. Plant Physiol.">
        <title>Identification and characterization of cis-acting elements involved in the regulation of ABA- and/or GA-mediated LuPLR1 gene expression and lignan biosynthesis in flax (Linum usitatissimum L.) cell cultures.</title>
        <authorList>
            <person name="Corbin C."/>
            <person name="Renouard S."/>
            <person name="Lopez T."/>
            <person name="Lamblin F."/>
            <person name="Laine E."/>
            <person name="Hano C."/>
        </authorList>
    </citation>
    <scope>INDUCTION BY ABSCISIC ACID AND GIBBERELLINS</scope>
</reference>
<protein>
    <recommendedName>
        <fullName>Bifunctional pinoresinol-lariciresinol reductase</fullName>
        <shortName>LuPLR</shortName>
        <shortName>LuPLR1</shortName>
    </recommendedName>
</protein>
<keyword id="KW-0521">NADP</keyword>
<keyword id="KW-0560">Oxidoreductase</keyword>
<accession>P0DKC8</accession>